<sequence>MEPITRVTGTGVPLKRSNVDTDQIVPSQFLKRVTKTGFEDALFFQWRKDPAFFVNQPAYEGATVLVAGPDFGTGSSREHAVWALRDYGFRAVLSPRFGDIFRGNSGKQGLLTGIVTEDDVERLWAAMDAEPGLDLTVDLVERIATAPGLTVPFEIDEYTRWRLLEGLDDIALTLRDEDAITTFEHRRASWRPRTLPARPAALEN</sequence>
<gene>
    <name evidence="1" type="primary">leuD</name>
    <name type="ordered locus">CMM_1342</name>
</gene>
<proteinExistence type="inferred from homology"/>
<name>LEUD_CLAM3</name>
<protein>
    <recommendedName>
        <fullName evidence="1">3-isopropylmalate dehydratase small subunit</fullName>
        <ecNumber evidence="1">4.2.1.33</ecNumber>
    </recommendedName>
    <alternativeName>
        <fullName evidence="1">Alpha-IPM isomerase</fullName>
        <shortName evidence="1">IPMI</shortName>
    </alternativeName>
    <alternativeName>
        <fullName evidence="1">Isopropylmalate isomerase</fullName>
    </alternativeName>
</protein>
<accession>A5CQN3</accession>
<evidence type="ECO:0000255" key="1">
    <source>
        <dbReference type="HAMAP-Rule" id="MF_01031"/>
    </source>
</evidence>
<dbReference type="EC" id="4.2.1.33" evidence="1"/>
<dbReference type="EMBL" id="AM711867">
    <property type="protein sequence ID" value="CAN01387.1"/>
    <property type="molecule type" value="Genomic_DNA"/>
</dbReference>
<dbReference type="RefSeq" id="WP_012038028.1">
    <property type="nucleotide sequence ID" value="NC_009480.1"/>
</dbReference>
<dbReference type="SMR" id="A5CQN3"/>
<dbReference type="GeneID" id="92947313"/>
<dbReference type="KEGG" id="cmi:CMM_1342"/>
<dbReference type="eggNOG" id="COG0066">
    <property type="taxonomic scope" value="Bacteria"/>
</dbReference>
<dbReference type="HOGENOM" id="CLU_081378_0_1_11"/>
<dbReference type="OrthoDB" id="9777465at2"/>
<dbReference type="UniPathway" id="UPA00048">
    <property type="reaction ID" value="UER00071"/>
</dbReference>
<dbReference type="Proteomes" id="UP000001564">
    <property type="component" value="Chromosome"/>
</dbReference>
<dbReference type="GO" id="GO:0009316">
    <property type="term" value="C:3-isopropylmalate dehydratase complex"/>
    <property type="evidence" value="ECO:0007669"/>
    <property type="project" value="InterPro"/>
</dbReference>
<dbReference type="GO" id="GO:0003861">
    <property type="term" value="F:3-isopropylmalate dehydratase activity"/>
    <property type="evidence" value="ECO:0007669"/>
    <property type="project" value="UniProtKB-UniRule"/>
</dbReference>
<dbReference type="GO" id="GO:0009098">
    <property type="term" value="P:L-leucine biosynthetic process"/>
    <property type="evidence" value="ECO:0007669"/>
    <property type="project" value="UniProtKB-UniRule"/>
</dbReference>
<dbReference type="CDD" id="cd01577">
    <property type="entry name" value="IPMI_Swivel"/>
    <property type="match status" value="1"/>
</dbReference>
<dbReference type="FunFam" id="3.20.19.10:FF:000003">
    <property type="entry name" value="3-isopropylmalate dehydratase small subunit"/>
    <property type="match status" value="1"/>
</dbReference>
<dbReference type="Gene3D" id="3.20.19.10">
    <property type="entry name" value="Aconitase, domain 4"/>
    <property type="match status" value="1"/>
</dbReference>
<dbReference type="HAMAP" id="MF_01031">
    <property type="entry name" value="LeuD_type1"/>
    <property type="match status" value="1"/>
</dbReference>
<dbReference type="InterPro" id="IPR004431">
    <property type="entry name" value="3-IsopropMal_deHydase_ssu"/>
</dbReference>
<dbReference type="InterPro" id="IPR015928">
    <property type="entry name" value="Aconitase/3IPM_dehydase_swvl"/>
</dbReference>
<dbReference type="InterPro" id="IPR000573">
    <property type="entry name" value="AconitaseA/IPMdHydase_ssu_swvl"/>
</dbReference>
<dbReference type="InterPro" id="IPR033940">
    <property type="entry name" value="IPMI_Swivel"/>
</dbReference>
<dbReference type="InterPro" id="IPR050075">
    <property type="entry name" value="LeuD"/>
</dbReference>
<dbReference type="NCBIfam" id="TIGR00171">
    <property type="entry name" value="leuD"/>
    <property type="match status" value="1"/>
</dbReference>
<dbReference type="NCBIfam" id="NF002458">
    <property type="entry name" value="PRK01641.1"/>
    <property type="match status" value="1"/>
</dbReference>
<dbReference type="PANTHER" id="PTHR43345:SF5">
    <property type="entry name" value="3-ISOPROPYLMALATE DEHYDRATASE SMALL SUBUNIT"/>
    <property type="match status" value="1"/>
</dbReference>
<dbReference type="PANTHER" id="PTHR43345">
    <property type="entry name" value="3-ISOPROPYLMALATE DEHYDRATASE SMALL SUBUNIT 2-RELATED-RELATED"/>
    <property type="match status" value="1"/>
</dbReference>
<dbReference type="Pfam" id="PF00694">
    <property type="entry name" value="Aconitase_C"/>
    <property type="match status" value="1"/>
</dbReference>
<dbReference type="SUPFAM" id="SSF52016">
    <property type="entry name" value="LeuD/IlvD-like"/>
    <property type="match status" value="1"/>
</dbReference>
<organism>
    <name type="scientific">Clavibacter michiganensis subsp. michiganensis (strain NCPPB 382)</name>
    <dbReference type="NCBI Taxonomy" id="443906"/>
    <lineage>
        <taxon>Bacteria</taxon>
        <taxon>Bacillati</taxon>
        <taxon>Actinomycetota</taxon>
        <taxon>Actinomycetes</taxon>
        <taxon>Micrococcales</taxon>
        <taxon>Microbacteriaceae</taxon>
        <taxon>Clavibacter</taxon>
    </lineage>
</organism>
<reference key="1">
    <citation type="journal article" date="2008" name="J. Bacteriol.">
        <title>The genome sequence of the tomato-pathogenic actinomycete Clavibacter michiganensis subsp. michiganensis NCPPB382 reveals a large island involved in pathogenicity.</title>
        <authorList>
            <person name="Gartemann K.-H."/>
            <person name="Abt B."/>
            <person name="Bekel T."/>
            <person name="Burger A."/>
            <person name="Engemann J."/>
            <person name="Fluegel M."/>
            <person name="Gaigalat L."/>
            <person name="Goesmann A."/>
            <person name="Graefen I."/>
            <person name="Kalinowski J."/>
            <person name="Kaup O."/>
            <person name="Kirchner O."/>
            <person name="Krause L."/>
            <person name="Linke B."/>
            <person name="McHardy A."/>
            <person name="Meyer F."/>
            <person name="Pohle S."/>
            <person name="Rueckert C."/>
            <person name="Schneiker S."/>
            <person name="Zellermann E.-M."/>
            <person name="Puehler A."/>
            <person name="Eichenlaub R."/>
            <person name="Kaiser O."/>
            <person name="Bartels D."/>
        </authorList>
    </citation>
    <scope>NUCLEOTIDE SEQUENCE [LARGE SCALE GENOMIC DNA]</scope>
    <source>
        <strain>NCPPB 382</strain>
    </source>
</reference>
<feature type="chain" id="PRO_1000063752" description="3-isopropylmalate dehydratase small subunit">
    <location>
        <begin position="1"/>
        <end position="204"/>
    </location>
</feature>
<comment type="function">
    <text evidence="1">Catalyzes the isomerization between 2-isopropylmalate and 3-isopropylmalate, via the formation of 2-isopropylmaleate.</text>
</comment>
<comment type="catalytic activity">
    <reaction evidence="1">
        <text>(2R,3S)-3-isopropylmalate = (2S)-2-isopropylmalate</text>
        <dbReference type="Rhea" id="RHEA:32287"/>
        <dbReference type="ChEBI" id="CHEBI:1178"/>
        <dbReference type="ChEBI" id="CHEBI:35121"/>
        <dbReference type="EC" id="4.2.1.33"/>
    </reaction>
</comment>
<comment type="pathway">
    <text evidence="1">Amino-acid biosynthesis; L-leucine biosynthesis; L-leucine from 3-methyl-2-oxobutanoate: step 2/4.</text>
</comment>
<comment type="subunit">
    <text evidence="1">Heterodimer of LeuC and LeuD.</text>
</comment>
<comment type="similarity">
    <text evidence="1">Belongs to the LeuD family. LeuD type 1 subfamily.</text>
</comment>
<keyword id="KW-0028">Amino-acid biosynthesis</keyword>
<keyword id="KW-0100">Branched-chain amino acid biosynthesis</keyword>
<keyword id="KW-0432">Leucine biosynthesis</keyword>
<keyword id="KW-0456">Lyase</keyword>